<organism>
    <name type="scientific">Trittame loki</name>
    <name type="common">Brush-footed trapdoor spider</name>
    <dbReference type="NCBI Taxonomy" id="1295018"/>
    <lineage>
        <taxon>Eukaryota</taxon>
        <taxon>Metazoa</taxon>
        <taxon>Ecdysozoa</taxon>
        <taxon>Arthropoda</taxon>
        <taxon>Chelicerata</taxon>
        <taxon>Arachnida</taxon>
        <taxon>Araneae</taxon>
        <taxon>Mygalomorphae</taxon>
        <taxon>Barychelidae</taxon>
        <taxon>Trittame</taxon>
    </lineage>
</organism>
<accession>W4VSJ0</accession>
<reference key="1">
    <citation type="journal article" date="2013" name="Toxins">
        <title>A proteomics and transcriptomics investigation of the venom from the barychelid spider Trittame loki (brush-foot trapdoor).</title>
        <authorList>
            <person name="Undheim E.A."/>
            <person name="Sunagar K."/>
            <person name="Herzig V."/>
            <person name="Kely L."/>
            <person name="Low D.H."/>
            <person name="Jackson T.N."/>
            <person name="Jones A."/>
            <person name="Kurniawan N."/>
            <person name="King G.F."/>
            <person name="Ali S.A."/>
            <person name="Antunes A."/>
            <person name="Ruder T."/>
            <person name="Fry B.G."/>
        </authorList>
    </citation>
    <scope>NUCLEOTIDE SEQUENCE [MRNA]</scope>
    <scope>IDENTIFICATION BY MASS SPECTROMETRY</scope>
    <source>
        <tissue>Venom</tissue>
        <tissue>Venom gland</tissue>
    </source>
</reference>
<proteinExistence type="evidence at protein level"/>
<protein>
    <recommendedName>
        <fullName>Acetylcholinesterase-1</fullName>
        <shortName>AChE</shortName>
        <ecNumber>3.1.1.7</ecNumber>
    </recommendedName>
</protein>
<feature type="signal peptide" evidence="2">
    <location>
        <begin position="1"/>
        <end position="21"/>
    </location>
</feature>
<feature type="chain" id="PRO_0000429205" description="Acetylcholinesterase-1">
    <location>
        <begin position="22"/>
        <end position="559"/>
    </location>
</feature>
<feature type="active site" description="Acyl-ester intermediate" evidence="1">
    <location>
        <position position="223"/>
    </location>
</feature>
<feature type="active site" description="Charge relay system" evidence="1">
    <location>
        <position position="354"/>
    </location>
</feature>
<feature type="active site" description="Charge relay system" evidence="1">
    <location>
        <position position="471"/>
    </location>
</feature>
<feature type="binding site" evidence="1">
    <location>
        <begin position="142"/>
        <end position="143"/>
    </location>
    <ligand>
        <name>substrate</name>
    </ligand>
</feature>
<feature type="modified residue" description="Phosphoserine" evidence="1">
    <location>
        <position position="223"/>
    </location>
</feature>
<feature type="glycosylation site" description="N-linked (GlcNAc...) asparagine" evidence="2">
    <location>
        <position position="278"/>
    </location>
</feature>
<feature type="glycosylation site" description="N-linked (GlcNAc...) asparagine" evidence="2">
    <location>
        <position position="342"/>
    </location>
</feature>
<feature type="glycosylation site" description="N-linked (GlcNAc...) asparagine" evidence="2">
    <location>
        <position position="374"/>
    </location>
</feature>
<feature type="disulfide bond" evidence="1">
    <location>
        <begin position="92"/>
        <end position="114"/>
    </location>
</feature>
<feature type="disulfide bond" evidence="1">
    <location>
        <begin position="276"/>
        <end position="293"/>
    </location>
</feature>
<feature type="disulfide bond" evidence="1">
    <location>
        <begin position="432"/>
        <end position="550"/>
    </location>
</feature>
<name>ACES_TRILK</name>
<keyword id="KW-1015">Disulfide bond</keyword>
<keyword id="KW-0325">Glycoprotein</keyword>
<keyword id="KW-0378">Hydrolase</keyword>
<keyword id="KW-0531">Neurotransmitter degradation</keyword>
<keyword id="KW-0597">Phosphoprotein</keyword>
<keyword id="KW-0964">Secreted</keyword>
<keyword id="KW-0719">Serine esterase</keyword>
<keyword id="KW-0732">Signal</keyword>
<sequence>MMLPRCFVTVLLMSSVLYIGGETSSEVLGPVVSTEAGSFQGMELTTHGERVIYAFLGIPYAKPPTGLLRFKKPQPADFIQGTYKATEKPPSCFQLDSDLQLPWADPDSPMKEDCLFLNLWTPASLSTEEEELKSVMVWIHGGGYTSGSSALDVYDGQTLSSSGDVVVVTMNYRLDAFGFLNSLTEDAPGNMALYDQLLALQWVHTNIKYFGGDPNKVTLFGESVGAFATSFLALSPLTKGLFQKIMLESGSAYNKLTVNSIDQAKNNNQLATLVGCANETFTLISNPEEVVACMREVAPAKFTQTYYKELGSEREKINFIFWPHFGDDILPTRTAELIKEKNLTALFAGVNSVEGSALSVFFFPEVYQMFVESNLTLTKAYATILMNEFFKVFNFQDSAKAIEFYLGDVEDDDEEGIRSALFGVVGDYIITCPTIYLADKYSERGANVQFYRFDRRPSTSQWPPEWMGAAHNDEIQFVFGMPVRYPEKYTEEERTLSEYMTRTWTNFVKSEDLKLKNGSQWPSYSLSEPQFATLQTNEQIIGSGQRKAECDFWRPYFDI</sequence>
<dbReference type="EC" id="3.1.1.7"/>
<dbReference type="EMBL" id="GAQE01000001">
    <property type="protein sequence ID" value="JAB84553.1"/>
    <property type="molecule type" value="Transcribed_RNA"/>
</dbReference>
<dbReference type="SMR" id="W4VSJ0"/>
<dbReference type="ESTHER" id="trilk-aces">
    <property type="family name" value="Cholinesterase-like"/>
</dbReference>
<dbReference type="ArachnoServer" id="AS002074">
    <property type="toxin name" value="Acetylcholinesterase-1-Trittame loki"/>
</dbReference>
<dbReference type="GO" id="GO:0005615">
    <property type="term" value="C:extracellular space"/>
    <property type="evidence" value="ECO:0007669"/>
    <property type="project" value="TreeGrafter"/>
</dbReference>
<dbReference type="GO" id="GO:0005886">
    <property type="term" value="C:plasma membrane"/>
    <property type="evidence" value="ECO:0007669"/>
    <property type="project" value="TreeGrafter"/>
</dbReference>
<dbReference type="GO" id="GO:0003990">
    <property type="term" value="F:acetylcholinesterase activity"/>
    <property type="evidence" value="ECO:0007669"/>
    <property type="project" value="UniProtKB-EC"/>
</dbReference>
<dbReference type="GO" id="GO:0006581">
    <property type="term" value="P:acetylcholine catabolic process"/>
    <property type="evidence" value="ECO:0007669"/>
    <property type="project" value="TreeGrafter"/>
</dbReference>
<dbReference type="GO" id="GO:0019695">
    <property type="term" value="P:choline metabolic process"/>
    <property type="evidence" value="ECO:0007669"/>
    <property type="project" value="TreeGrafter"/>
</dbReference>
<dbReference type="FunFam" id="3.40.50.1820:FF:000029">
    <property type="entry name" value="Acetylcholinesterase"/>
    <property type="match status" value="1"/>
</dbReference>
<dbReference type="Gene3D" id="3.40.50.1820">
    <property type="entry name" value="alpha/beta hydrolase"/>
    <property type="match status" value="1"/>
</dbReference>
<dbReference type="InterPro" id="IPR029058">
    <property type="entry name" value="AB_hydrolase_fold"/>
</dbReference>
<dbReference type="InterPro" id="IPR050654">
    <property type="entry name" value="AChE-related_enzymes"/>
</dbReference>
<dbReference type="InterPro" id="IPR002018">
    <property type="entry name" value="CarbesteraseB"/>
</dbReference>
<dbReference type="InterPro" id="IPR019819">
    <property type="entry name" value="Carboxylesterase_B_CS"/>
</dbReference>
<dbReference type="InterPro" id="IPR000997">
    <property type="entry name" value="Cholinesterase"/>
</dbReference>
<dbReference type="PANTHER" id="PTHR43918">
    <property type="entry name" value="ACETYLCHOLINESTERASE"/>
    <property type="match status" value="1"/>
</dbReference>
<dbReference type="PANTHER" id="PTHR43918:SF4">
    <property type="entry name" value="CARBOXYLIC ESTER HYDROLASE"/>
    <property type="match status" value="1"/>
</dbReference>
<dbReference type="Pfam" id="PF00135">
    <property type="entry name" value="COesterase"/>
    <property type="match status" value="1"/>
</dbReference>
<dbReference type="PRINTS" id="PR00878">
    <property type="entry name" value="CHOLNESTRASE"/>
</dbReference>
<dbReference type="SUPFAM" id="SSF53474">
    <property type="entry name" value="alpha/beta-Hydrolases"/>
    <property type="match status" value="1"/>
</dbReference>
<dbReference type="PROSITE" id="PS00941">
    <property type="entry name" value="CARBOXYLESTERASE_B_2"/>
    <property type="match status" value="1"/>
</dbReference>
<comment type="function">
    <text evidence="1">Terminates signal transduction at the neuromuscular junction by rapid hydrolysis of the acetylcholine released into the synaptic cleft.</text>
</comment>
<comment type="catalytic activity">
    <reaction>
        <text>acetylcholine + H2O = choline + acetate + H(+)</text>
        <dbReference type="Rhea" id="RHEA:17561"/>
        <dbReference type="ChEBI" id="CHEBI:15354"/>
        <dbReference type="ChEBI" id="CHEBI:15355"/>
        <dbReference type="ChEBI" id="CHEBI:15377"/>
        <dbReference type="ChEBI" id="CHEBI:15378"/>
        <dbReference type="ChEBI" id="CHEBI:30089"/>
        <dbReference type="EC" id="3.1.1.7"/>
    </reaction>
</comment>
<comment type="subcellular location">
    <subcellularLocation>
        <location>Secreted</location>
    </subcellularLocation>
</comment>
<comment type="tissue specificity">
    <text>Expressed by the venom gland.</text>
</comment>
<comment type="similarity">
    <text evidence="3">Belongs to the type-B carboxylesterase/lipase family.</text>
</comment>
<evidence type="ECO:0000250" key="1"/>
<evidence type="ECO:0000255" key="2"/>
<evidence type="ECO:0000305" key="3"/>